<organism>
    <name type="scientific">Mus musculus</name>
    <name type="common">Mouse</name>
    <dbReference type="NCBI Taxonomy" id="10090"/>
    <lineage>
        <taxon>Eukaryota</taxon>
        <taxon>Metazoa</taxon>
        <taxon>Chordata</taxon>
        <taxon>Craniata</taxon>
        <taxon>Vertebrata</taxon>
        <taxon>Euteleostomi</taxon>
        <taxon>Mammalia</taxon>
        <taxon>Eutheria</taxon>
        <taxon>Euarchontoglires</taxon>
        <taxon>Glires</taxon>
        <taxon>Rodentia</taxon>
        <taxon>Myomorpha</taxon>
        <taxon>Muroidea</taxon>
        <taxon>Muridae</taxon>
        <taxon>Murinae</taxon>
        <taxon>Mus</taxon>
        <taxon>Mus</taxon>
    </lineage>
</organism>
<reference key="1">
    <citation type="journal article" date="1997" name="Proc. Natl. Acad. Sci. U.S.A.">
        <title>Interactive cloning with the SH3 domain of N-src identifies a new brain specific ion channel protein, with homology to eag and cyclic nucleotide-gated channels.</title>
        <authorList>
            <person name="Santoro B."/>
            <person name="Grant S.G.N."/>
            <person name="Bartsch D."/>
            <person name="Kandel E.R."/>
        </authorList>
    </citation>
    <scope>NUCLEOTIDE SEQUENCE [MRNA]</scope>
    <scope>TISSUE SPECIFICITY</scope>
    <scope>GLYCOSYLATION AT ASN-327</scope>
    <scope>INTERACTION WITH CSK</scope>
    <source>
        <strain>C57BL/6J</strain>
        <tissue>Brain</tissue>
    </source>
</reference>
<reference key="2">
    <citation type="journal article" date="1998" name="Nature">
        <title>A family of hyperpolarization-activated cation channels.</title>
        <authorList>
            <person name="Ludwig A."/>
            <person name="Zong X."/>
            <person name="Jeglitsch M."/>
            <person name="Hofmann F."/>
            <person name="Biel M."/>
        </authorList>
    </citation>
    <scope>NUCLEOTIDE SEQUENCE [MRNA]</scope>
    <source>
        <strain>BALB/cJ</strain>
        <tissue>Brain</tissue>
    </source>
</reference>
<reference key="3">
    <citation type="journal article" date="2005" name="Science">
        <title>The transcriptional landscape of the mammalian genome.</title>
        <authorList>
            <person name="Carninci P."/>
            <person name="Kasukawa T."/>
            <person name="Katayama S."/>
            <person name="Gough J."/>
            <person name="Frith M.C."/>
            <person name="Maeda N."/>
            <person name="Oyama R."/>
            <person name="Ravasi T."/>
            <person name="Lenhard B."/>
            <person name="Wells C."/>
            <person name="Kodzius R."/>
            <person name="Shimokawa K."/>
            <person name="Bajic V.B."/>
            <person name="Brenner S.E."/>
            <person name="Batalov S."/>
            <person name="Forrest A.R."/>
            <person name="Zavolan M."/>
            <person name="Davis M.J."/>
            <person name="Wilming L.G."/>
            <person name="Aidinis V."/>
            <person name="Allen J.E."/>
            <person name="Ambesi-Impiombato A."/>
            <person name="Apweiler R."/>
            <person name="Aturaliya R.N."/>
            <person name="Bailey T.L."/>
            <person name="Bansal M."/>
            <person name="Baxter L."/>
            <person name="Beisel K.W."/>
            <person name="Bersano T."/>
            <person name="Bono H."/>
            <person name="Chalk A.M."/>
            <person name="Chiu K.P."/>
            <person name="Choudhary V."/>
            <person name="Christoffels A."/>
            <person name="Clutterbuck D.R."/>
            <person name="Crowe M.L."/>
            <person name="Dalla E."/>
            <person name="Dalrymple B.P."/>
            <person name="de Bono B."/>
            <person name="Della Gatta G."/>
            <person name="di Bernardo D."/>
            <person name="Down T."/>
            <person name="Engstrom P."/>
            <person name="Fagiolini M."/>
            <person name="Faulkner G."/>
            <person name="Fletcher C.F."/>
            <person name="Fukushima T."/>
            <person name="Furuno M."/>
            <person name="Futaki S."/>
            <person name="Gariboldi M."/>
            <person name="Georgii-Hemming P."/>
            <person name="Gingeras T.R."/>
            <person name="Gojobori T."/>
            <person name="Green R.E."/>
            <person name="Gustincich S."/>
            <person name="Harbers M."/>
            <person name="Hayashi Y."/>
            <person name="Hensch T.K."/>
            <person name="Hirokawa N."/>
            <person name="Hill D."/>
            <person name="Huminiecki L."/>
            <person name="Iacono M."/>
            <person name="Ikeo K."/>
            <person name="Iwama A."/>
            <person name="Ishikawa T."/>
            <person name="Jakt M."/>
            <person name="Kanapin A."/>
            <person name="Katoh M."/>
            <person name="Kawasawa Y."/>
            <person name="Kelso J."/>
            <person name="Kitamura H."/>
            <person name="Kitano H."/>
            <person name="Kollias G."/>
            <person name="Krishnan S.P."/>
            <person name="Kruger A."/>
            <person name="Kummerfeld S.K."/>
            <person name="Kurochkin I.V."/>
            <person name="Lareau L.F."/>
            <person name="Lazarevic D."/>
            <person name="Lipovich L."/>
            <person name="Liu J."/>
            <person name="Liuni S."/>
            <person name="McWilliam S."/>
            <person name="Madan Babu M."/>
            <person name="Madera M."/>
            <person name="Marchionni L."/>
            <person name="Matsuda H."/>
            <person name="Matsuzawa S."/>
            <person name="Miki H."/>
            <person name="Mignone F."/>
            <person name="Miyake S."/>
            <person name="Morris K."/>
            <person name="Mottagui-Tabar S."/>
            <person name="Mulder N."/>
            <person name="Nakano N."/>
            <person name="Nakauchi H."/>
            <person name="Ng P."/>
            <person name="Nilsson R."/>
            <person name="Nishiguchi S."/>
            <person name="Nishikawa S."/>
            <person name="Nori F."/>
            <person name="Ohara O."/>
            <person name="Okazaki Y."/>
            <person name="Orlando V."/>
            <person name="Pang K.C."/>
            <person name="Pavan W.J."/>
            <person name="Pavesi G."/>
            <person name="Pesole G."/>
            <person name="Petrovsky N."/>
            <person name="Piazza S."/>
            <person name="Reed J."/>
            <person name="Reid J.F."/>
            <person name="Ring B.Z."/>
            <person name="Ringwald M."/>
            <person name="Rost B."/>
            <person name="Ruan Y."/>
            <person name="Salzberg S.L."/>
            <person name="Sandelin A."/>
            <person name="Schneider C."/>
            <person name="Schoenbach C."/>
            <person name="Sekiguchi K."/>
            <person name="Semple C.A."/>
            <person name="Seno S."/>
            <person name="Sessa L."/>
            <person name="Sheng Y."/>
            <person name="Shibata Y."/>
            <person name="Shimada H."/>
            <person name="Shimada K."/>
            <person name="Silva D."/>
            <person name="Sinclair B."/>
            <person name="Sperling S."/>
            <person name="Stupka E."/>
            <person name="Sugiura K."/>
            <person name="Sultana R."/>
            <person name="Takenaka Y."/>
            <person name="Taki K."/>
            <person name="Tammoja K."/>
            <person name="Tan S.L."/>
            <person name="Tang S."/>
            <person name="Taylor M.S."/>
            <person name="Tegner J."/>
            <person name="Teichmann S.A."/>
            <person name="Ueda H.R."/>
            <person name="van Nimwegen E."/>
            <person name="Verardo R."/>
            <person name="Wei C.L."/>
            <person name="Yagi K."/>
            <person name="Yamanishi H."/>
            <person name="Zabarovsky E."/>
            <person name="Zhu S."/>
            <person name="Zimmer A."/>
            <person name="Hide W."/>
            <person name="Bult C."/>
            <person name="Grimmond S.M."/>
            <person name="Teasdale R.D."/>
            <person name="Liu E.T."/>
            <person name="Brusic V."/>
            <person name="Quackenbush J."/>
            <person name="Wahlestedt C."/>
            <person name="Mattick J.S."/>
            <person name="Hume D.A."/>
            <person name="Kai C."/>
            <person name="Sasaki D."/>
            <person name="Tomaru Y."/>
            <person name="Fukuda S."/>
            <person name="Kanamori-Katayama M."/>
            <person name="Suzuki M."/>
            <person name="Aoki J."/>
            <person name="Arakawa T."/>
            <person name="Iida J."/>
            <person name="Imamura K."/>
            <person name="Itoh M."/>
            <person name="Kato T."/>
            <person name="Kawaji H."/>
            <person name="Kawagashira N."/>
            <person name="Kawashima T."/>
            <person name="Kojima M."/>
            <person name="Kondo S."/>
            <person name="Konno H."/>
            <person name="Nakano K."/>
            <person name="Ninomiya N."/>
            <person name="Nishio T."/>
            <person name="Okada M."/>
            <person name="Plessy C."/>
            <person name="Shibata K."/>
            <person name="Shiraki T."/>
            <person name="Suzuki S."/>
            <person name="Tagami M."/>
            <person name="Waki K."/>
            <person name="Watahiki A."/>
            <person name="Okamura-Oho Y."/>
            <person name="Suzuki H."/>
            <person name="Kawai J."/>
            <person name="Hayashizaki Y."/>
        </authorList>
    </citation>
    <scope>NUCLEOTIDE SEQUENCE [LARGE SCALE MRNA] OF 377-910</scope>
    <source>
        <strain>C57BL/6J</strain>
        <tissue>Head</tissue>
    </source>
</reference>
<reference key="4">
    <citation type="journal article" date="1998" name="Cell">
        <title>Identification of a gene encoding a hyperpolarization-activated 'pacemaker' channel of brain.</title>
        <authorList>
            <person name="Santoro B."/>
            <person name="Liu D.T."/>
            <person name="Yao H."/>
            <person name="Bartsch D."/>
            <person name="Kandel E.R."/>
            <person name="Siegelbaum S.A."/>
            <person name="Tibbs G.R."/>
        </authorList>
    </citation>
    <scope>FUNCTION</scope>
    <scope>TRANSPORTER ACTIVITY</scope>
    <scope>SUBCELLULAR LOCATION</scope>
    <scope>ACTIVITY REGULATION</scope>
</reference>
<reference key="5">
    <citation type="journal article" date="2001" name="Circ. Res.">
        <title>MinK-related peptide 1: a beta subunit for the HCN ion channel subunit family enhances expression and speeds activation.</title>
        <authorList>
            <person name="Yu H."/>
            <person name="Wu J."/>
            <person name="Potapova I."/>
            <person name="Wymore R.T."/>
            <person name="Holmes B."/>
            <person name="Zuckerman J."/>
            <person name="Pan Z."/>
            <person name="Wang H."/>
            <person name="Shi W."/>
            <person name="Robinson R.B."/>
            <person name="El-Maghrabi M.R."/>
            <person name="Benjamin W."/>
            <person name="Dixon J.E."/>
            <person name="McKinnon D."/>
            <person name="Cohen I.S."/>
            <person name="Wymore R."/>
        </authorList>
    </citation>
    <scope>INTERACTION WITH KCNE2</scope>
</reference>
<reference key="6">
    <citation type="journal article" date="2001" name="Nature">
        <title>Molecular mechanism of cAMP modulation of HCN pacemaker channels.</title>
        <authorList>
            <person name="Wainger B.J."/>
            <person name="DeGennaro M."/>
            <person name="Santoro B."/>
            <person name="Siegelbaum S.A."/>
            <person name="Tibbs G.R."/>
        </authorList>
    </citation>
    <scope>FUNCTION</scope>
    <scope>SUBCELLULAR LOCATION</scope>
    <scope>ACTIVITY REGULATION</scope>
</reference>
<reference key="7">
    <citation type="journal article" date="2001" name="Nature">
        <title>Hyperpolarization-activated channels HCN1 and HCN4 mediate responses to sour stimuli.</title>
        <authorList>
            <person name="Stevens D.R."/>
            <person name="Seifert R."/>
            <person name="Bufe B."/>
            <person name="Mueller F."/>
            <person name="Kremmer E."/>
            <person name="Gauss R."/>
            <person name="Meyerhof W."/>
            <person name="Kaupp U.B."/>
            <person name="Lindemann B."/>
        </authorList>
    </citation>
    <scope>FUNCTION</scope>
    <scope>TISSUE SPECIFICITY</scope>
</reference>
<reference key="8">
    <citation type="journal article" date="2002" name="Circ. Res.">
        <title>Dominant-negative suppression of HCN1- and HCN2-encoded pacemaker currents by an engineered HCN1 construct: insights into structure-function relationships and multimerization.</title>
        <authorList>
            <person name="Xue T."/>
            <person name="Marban E."/>
            <person name="Li R.A."/>
        </authorList>
    </citation>
    <scope>INTERACTION WITH HCN2</scope>
    <scope>MUTAGENESIS OF GLY-349; TYR-350 AND GLY-351</scope>
</reference>
<reference key="9">
    <citation type="journal article" date="2002" name="J. Biol. Chem.">
        <title>Different roles for the cyclic nucleotide binding domain and amino terminus in assembly and expression of hyperpolarization-activated, cyclic nucleotide-gated channels.</title>
        <authorList>
            <person name="Proenza C."/>
            <person name="Tran N."/>
            <person name="Angoli D."/>
            <person name="Zahynacz K."/>
            <person name="Balcar P."/>
            <person name="Accili E.A."/>
        </authorList>
    </citation>
    <scope>FUNCTION</scope>
    <scope>INTERACTION WITH HCN2</scope>
</reference>
<reference key="10">
    <citation type="journal article" date="2002" name="J. Biol. Chem.">
        <title>An external determinant in the S5-P linker of the pacemaker (HCN) channel identified by sulfhydryl modification.</title>
        <authorList>
            <person name="Xue T."/>
            <person name="Li R.A."/>
        </authorList>
    </citation>
    <scope>MUTAGENESIS OF CYS-303 AND CYS-318</scope>
</reference>
<reference key="11">
    <citation type="journal article" date="2003" name="Cell">
        <title>The hyperpolarization-activated HCN1 channel is important for motor learning and neuronal integration by cerebellar Purkinje cells.</title>
        <authorList>
            <person name="Nolan M.F."/>
            <person name="Malleret G."/>
            <person name="Lee K.H."/>
            <person name="Gibbs E."/>
            <person name="Dudman J.T."/>
            <person name="Santoro B."/>
            <person name="Yin D."/>
            <person name="Thompson R.F."/>
            <person name="Siegelbaum S.A."/>
            <person name="Kandel E.R."/>
            <person name="Morozov A."/>
        </authorList>
    </citation>
    <scope>DISRUPTION PHENOTYPE</scope>
    <scope>FUNCTION</scope>
</reference>
<reference key="12">
    <citation type="journal article" date="2010" name="Cell">
        <title>A tissue-specific atlas of mouse protein phosphorylation and expression.</title>
        <authorList>
            <person name="Huttlin E.L."/>
            <person name="Jedrychowski M.P."/>
            <person name="Elias J.E."/>
            <person name="Goswami T."/>
            <person name="Rad R."/>
            <person name="Beausoleil S.A."/>
            <person name="Villen J."/>
            <person name="Haas W."/>
            <person name="Sowa M.E."/>
            <person name="Gygi S.P."/>
        </authorList>
    </citation>
    <scope>IDENTIFICATION BY MASS SPECTROMETRY [LARGE SCALE ANALYSIS]</scope>
    <source>
        <tissue>Brain</tissue>
    </source>
</reference>
<reference key="13">
    <citation type="journal article" date="2013" name="Circulation">
        <title>Sick sinus syndrome in HCN1-deficient mice.</title>
        <authorList>
            <person name="Fenske S."/>
            <person name="Krause S.C."/>
            <person name="Hassan S.I."/>
            <person name="Becirovic E."/>
            <person name="Auer F."/>
            <person name="Bernard R."/>
            <person name="Kupatt C."/>
            <person name="Lange P."/>
            <person name="Ziegler T."/>
            <person name="Wotjak C.T."/>
            <person name="Zhang H."/>
            <person name="Hammelmann V."/>
            <person name="Paparizos C."/>
            <person name="Biel M."/>
            <person name="Wahl-Schott C.A."/>
        </authorList>
    </citation>
    <scope>DISRUPTION PHENOTYPE</scope>
    <scope>FUNCTION</scope>
</reference>
<reference key="14">
    <citation type="journal article" date="2015" name="J. Neurosci.">
        <title>Selective Loss of Presynaptic Potassium Channel Clusters at the Cerebellar Basket Cell Terminal Pinceau in Adam11 Mutants Reveals Their Role in Ephaptic Control of Purkinje Cell Firing.</title>
        <authorList>
            <person name="Kole M.J."/>
            <person name="Qian J."/>
            <person name="Waase M.P."/>
            <person name="Klassen T.L."/>
            <person name="Chen T.T."/>
            <person name="Augustine G.J."/>
            <person name="Noebels J.L."/>
        </authorList>
    </citation>
    <scope>TISSUE SPECIFICITY</scope>
</reference>
<reference key="15">
    <citation type="journal article" date="2011" name="J. Biol. Chem.">
        <title>Tetramerization dynamics of C-terminal domain underlies isoform-specific cAMP gating in hyperpolarization-activated cyclic nucleotide-gated channels.</title>
        <authorList>
            <person name="Lolicato M."/>
            <person name="Nardini M."/>
            <person name="Gazzarrini S."/>
            <person name="Moller S."/>
            <person name="Bertinetti D."/>
            <person name="Herberg F.W."/>
            <person name="Bolognesi M."/>
            <person name="Martin H."/>
            <person name="Fasolini M."/>
            <person name="Bertrand J.A."/>
            <person name="Arrigoni C."/>
            <person name="Thiel G."/>
            <person name="Moroni A."/>
        </authorList>
    </citation>
    <scope>X-RAY CRYSTALLOGRAPHY (2.9 ANGSTROMS) OF 390-592 IN COMPLEX WITH CAMP</scope>
    <scope>FUNCTION</scope>
    <scope>SUBCELLULAR LOCATION</scope>
    <scope>NUCLEOTIDE-BINDING</scope>
    <scope>ACTIVITY REGULATION</scope>
    <scope>MUTAGENESIS OF ARG-538</scope>
    <scope>SUBUNIT</scope>
</reference>
<feature type="chain" id="PRO_0000054108" description="Potassium/sodium hyperpolarization-activated cyclic nucleotide-gated channel 1">
    <location>
        <begin position="1"/>
        <end position="910"/>
    </location>
</feature>
<feature type="topological domain" description="Cytoplasmic" evidence="1">
    <location>
        <begin position="1"/>
        <end position="131"/>
    </location>
</feature>
<feature type="transmembrane region" description="Helical; Name=Segment S1" evidence="1">
    <location>
        <begin position="132"/>
        <end position="153"/>
    </location>
</feature>
<feature type="topological domain" description="Extracellular" evidence="1">
    <location>
        <begin position="154"/>
        <end position="162"/>
    </location>
</feature>
<feature type="transmembrane region" description="Helical; Name=Segment S2" evidence="1">
    <location>
        <begin position="163"/>
        <end position="183"/>
    </location>
</feature>
<feature type="topological domain" description="Cytoplasmic" evidence="1">
    <location>
        <begin position="184"/>
        <end position="204"/>
    </location>
</feature>
<feature type="transmembrane region" description="Helical; Name=Segment S3" evidence="1">
    <location>
        <begin position="205"/>
        <end position="225"/>
    </location>
</feature>
<feature type="topological domain" description="Extracellular" evidence="1">
    <location>
        <begin position="226"/>
        <end position="249"/>
    </location>
</feature>
<feature type="transmembrane region" description="Helical; Voltage-sensor; Name=Segment S4" evidence="1">
    <location>
        <begin position="250"/>
        <end position="270"/>
    </location>
</feature>
<feature type="topological domain" description="Cytoplasmic" evidence="1">
    <location>
        <begin position="271"/>
        <end position="284"/>
    </location>
</feature>
<feature type="transmembrane region" description="Helical; Name=Segment S5" evidence="1">
    <location>
        <begin position="285"/>
        <end position="307"/>
    </location>
</feature>
<feature type="topological domain" description="Extracellular" evidence="1">
    <location>
        <begin position="308"/>
        <end position="333"/>
    </location>
</feature>
<feature type="intramembrane region" description="Pore-forming; Name=Segment H5" evidence="1">
    <location>
        <begin position="334"/>
        <end position="355"/>
    </location>
</feature>
<feature type="topological domain" description="Extracellular" evidence="1">
    <location>
        <begin position="356"/>
        <end position="360"/>
    </location>
</feature>
<feature type="transmembrane region" description="Helical; Name=Segment S6" evidence="1">
    <location>
        <begin position="361"/>
        <end position="381"/>
    </location>
</feature>
<feature type="topological domain" description="Cytoplasmic" evidence="1">
    <location>
        <begin position="382"/>
        <end position="910"/>
    </location>
</feature>
<feature type="region of interest" description="Disordered" evidence="2">
    <location>
        <begin position="1"/>
        <end position="75"/>
    </location>
</feature>
<feature type="region of interest" description="Disordered" evidence="2">
    <location>
        <begin position="634"/>
        <end position="681"/>
    </location>
</feature>
<feature type="region of interest" description="Disordered" evidence="2">
    <location>
        <begin position="771"/>
        <end position="791"/>
    </location>
</feature>
<feature type="region of interest" description="Disordered" evidence="2">
    <location>
        <begin position="865"/>
        <end position="910"/>
    </location>
</feature>
<feature type="short sequence motif" description="Selectivity filter" evidence="18">
    <location>
        <begin position="347"/>
        <end position="351"/>
    </location>
</feature>
<feature type="compositionally biased region" description="Low complexity" evidence="2">
    <location>
        <begin position="639"/>
        <end position="680"/>
    </location>
</feature>
<feature type="compositionally biased region" description="Polar residues" evidence="2">
    <location>
        <begin position="780"/>
        <end position="791"/>
    </location>
</feature>
<feature type="compositionally biased region" description="Pro residues" evidence="2">
    <location>
        <begin position="875"/>
        <end position="885"/>
    </location>
</feature>
<feature type="compositionally biased region" description="Basic and acidic residues" evidence="2">
    <location>
        <begin position="900"/>
        <end position="910"/>
    </location>
</feature>
<feature type="binding site" evidence="10 20">
    <location>
        <position position="528"/>
    </location>
    <ligand>
        <name>3',5'-cyclic AMP</name>
        <dbReference type="ChEBI" id="CHEBI:58165"/>
    </ligand>
</feature>
<feature type="binding site" evidence="10 20">
    <location>
        <position position="529"/>
    </location>
    <ligand>
        <name>3',5'-cyclic AMP</name>
        <dbReference type="ChEBI" id="CHEBI:58165"/>
    </ligand>
</feature>
<feature type="binding site" evidence="10 20">
    <location>
        <position position="531"/>
    </location>
    <ligand>
        <name>3',5'-cyclic AMP</name>
        <dbReference type="ChEBI" id="CHEBI:58165"/>
    </ligand>
</feature>
<feature type="binding site" evidence="10 20">
    <location>
        <position position="538"/>
    </location>
    <ligand>
        <name>3',5'-cyclic AMP</name>
        <dbReference type="ChEBI" id="CHEBI:58165"/>
    </ligand>
</feature>
<feature type="binding site" evidence="10 20">
    <location>
        <position position="539"/>
    </location>
    <ligand>
        <name>3',5'-cyclic AMP</name>
        <dbReference type="ChEBI" id="CHEBI:58165"/>
    </ligand>
</feature>
<feature type="binding site" evidence="10 20">
    <location>
        <position position="579"/>
    </location>
    <ligand>
        <name>3',5'-cyclic AMP</name>
        <dbReference type="ChEBI" id="CHEBI:58165"/>
    </ligand>
</feature>
<feature type="binding site" evidence="10 20">
    <location>
        <position position="582"/>
    </location>
    <ligand>
        <name>3',5'-cyclic AMP</name>
        <dbReference type="ChEBI" id="CHEBI:58165"/>
    </ligand>
</feature>
<feature type="glycosylation site" description="N-linked (GlcNAc...) asparagine" evidence="19">
    <location>
        <position position="327"/>
    </location>
</feature>
<feature type="mutagenesis site" description="Abolishes conductivity." evidence="8">
    <original>C</original>
    <variation>S</variation>
    <location>
        <position position="303"/>
    </location>
</feature>
<feature type="mutagenesis site" description="Abolishes sensitivity to sulfhydryl modification." evidence="8">
    <original>C</original>
    <variation>S</variation>
    <location>
        <position position="318"/>
    </location>
</feature>
<feature type="mutagenesis site" description="Abolishes conductivity; when associated with A-350 and A-351." evidence="7">
    <original>G</original>
    <variation>A</variation>
    <location>
        <position position="349"/>
    </location>
</feature>
<feature type="mutagenesis site" description="Abolishes conductivity; when associated with A-349 and A-351." evidence="7">
    <original>Y</original>
    <variation>A</variation>
    <location>
        <position position="350"/>
    </location>
</feature>
<feature type="mutagenesis site" description="Abolishes conductivity; when associated with A-349 and A-350." evidence="7">
    <original>G</original>
    <variation>A</variation>
    <location>
        <position position="351"/>
    </location>
</feature>
<feature type="mutagenesis site" description="Reduces affinity for cAMP and impairs tetramerization." evidence="10">
    <original>R</original>
    <variation>E</variation>
    <location>
        <position position="538"/>
    </location>
</feature>
<feature type="sequence conflict" description="In Ref. 1; AAC53518." evidence="17" ref="1">
    <original>G</original>
    <variation>R</variation>
    <location>
        <position position="42"/>
    </location>
</feature>
<feature type="sequence conflict" description="In Ref. 3; AK014722." evidence="17" ref="3">
    <original>R</original>
    <variation>S</variation>
    <location>
        <position position="394"/>
    </location>
</feature>
<feature type="helix" evidence="21">
    <location>
        <begin position="391"/>
        <end position="410"/>
    </location>
</feature>
<feature type="helix" evidence="21">
    <location>
        <begin position="414"/>
        <end position="428"/>
    </location>
</feature>
<feature type="helix" evidence="21">
    <location>
        <begin position="435"/>
        <end position="440"/>
    </location>
</feature>
<feature type="helix" evidence="21">
    <location>
        <begin position="444"/>
        <end position="454"/>
    </location>
</feature>
<feature type="helix" evidence="21">
    <location>
        <begin position="456"/>
        <end position="460"/>
    </location>
</feature>
<feature type="helix" evidence="21">
    <location>
        <begin position="463"/>
        <end position="466"/>
    </location>
</feature>
<feature type="helix" evidence="21">
    <location>
        <begin position="470"/>
        <end position="478"/>
    </location>
</feature>
<feature type="strand" evidence="21">
    <location>
        <begin position="481"/>
        <end position="485"/>
    </location>
</feature>
<feature type="strand" evidence="21">
    <location>
        <begin position="490"/>
        <end position="492"/>
    </location>
</feature>
<feature type="strand" evidence="21">
    <location>
        <begin position="500"/>
        <end position="506"/>
    </location>
</feature>
<feature type="strand" evidence="21">
    <location>
        <begin position="509"/>
        <end position="512"/>
    </location>
</feature>
<feature type="strand" evidence="21">
    <location>
        <begin position="519"/>
        <end position="521"/>
    </location>
</feature>
<feature type="strand" evidence="21">
    <location>
        <begin position="526"/>
        <end position="528"/>
    </location>
</feature>
<feature type="helix" evidence="21">
    <location>
        <begin position="529"/>
        <end position="534"/>
    </location>
</feature>
<feature type="strand" evidence="21">
    <location>
        <begin position="540"/>
        <end position="546"/>
    </location>
</feature>
<feature type="strand" evidence="21">
    <location>
        <begin position="548"/>
        <end position="554"/>
    </location>
</feature>
<feature type="helix" evidence="21">
    <location>
        <begin position="555"/>
        <end position="564"/>
    </location>
</feature>
<feature type="helix" evidence="21">
    <location>
        <begin position="567"/>
        <end position="583"/>
    </location>
</feature>
<keyword id="KW-0002">3D-structure</keyword>
<keyword id="KW-0114">cAMP</keyword>
<keyword id="KW-0116">cAMP-binding</keyword>
<keyword id="KW-1003">Cell membrane</keyword>
<keyword id="KW-0325">Glycoprotein</keyword>
<keyword id="KW-0407">Ion channel</keyword>
<keyword id="KW-0406">Ion transport</keyword>
<keyword id="KW-1071">Ligand-gated ion channel</keyword>
<keyword id="KW-0472">Membrane</keyword>
<keyword id="KW-0547">Nucleotide-binding</keyword>
<keyword id="KW-0630">Potassium</keyword>
<keyword id="KW-0631">Potassium channel</keyword>
<keyword id="KW-0633">Potassium transport</keyword>
<keyword id="KW-1185">Reference proteome</keyword>
<keyword id="KW-0915">Sodium</keyword>
<keyword id="KW-0894">Sodium channel</keyword>
<keyword id="KW-0739">Sodium transport</keyword>
<keyword id="KW-0812">Transmembrane</keyword>
<keyword id="KW-1133">Transmembrane helix</keyword>
<keyword id="KW-0813">Transport</keyword>
<keyword id="KW-0851">Voltage-gated channel</keyword>
<evidence type="ECO:0000250" key="1">
    <source>
        <dbReference type="UniProtKB" id="O60741"/>
    </source>
</evidence>
<evidence type="ECO:0000256" key="2">
    <source>
        <dbReference type="SAM" id="MobiDB-lite"/>
    </source>
</evidence>
<evidence type="ECO:0000269" key="3">
    <source>
    </source>
</evidence>
<evidence type="ECO:0000269" key="4">
    <source>
    </source>
</evidence>
<evidence type="ECO:0000269" key="5">
    <source>
    </source>
</evidence>
<evidence type="ECO:0000269" key="6">
    <source>
    </source>
</evidence>
<evidence type="ECO:0000269" key="7">
    <source>
    </source>
</evidence>
<evidence type="ECO:0000269" key="8">
    <source>
    </source>
</evidence>
<evidence type="ECO:0000269" key="9">
    <source>
    </source>
</evidence>
<evidence type="ECO:0000269" key="10">
    <source>
    </source>
</evidence>
<evidence type="ECO:0000269" key="11">
    <source>
    </source>
</evidence>
<evidence type="ECO:0000269" key="12">
    <source>
    </source>
</evidence>
<evidence type="ECO:0000269" key="13">
    <source>
    </source>
</evidence>
<evidence type="ECO:0000269" key="14">
    <source>
    </source>
</evidence>
<evidence type="ECO:0000303" key="15">
    <source>
    </source>
</evidence>
<evidence type="ECO:0000303" key="16">
    <source>
    </source>
</evidence>
<evidence type="ECO:0000305" key="17"/>
<evidence type="ECO:0000305" key="18">
    <source>
    </source>
</evidence>
<evidence type="ECO:0000305" key="19">
    <source>
    </source>
</evidence>
<evidence type="ECO:0007744" key="20">
    <source>
        <dbReference type="PDB" id="3U0Z"/>
    </source>
</evidence>
<evidence type="ECO:0007829" key="21">
    <source>
        <dbReference type="PDB" id="3U0Z"/>
    </source>
</evidence>
<proteinExistence type="evidence at protein level"/>
<sequence length="910" mass="102432">MEGGGKPNSASNSRDDGNSVFPSKAPATGPVAADKRLGTPPGGGAAGKEHGNSVCFKVDGGGGEEPAGSFEDAEGPRRQYGFMQRQFTSMLQPGVNKFSLRMFGSQKAVEKEQERVKTAGFWIIHPYSDFRFYWDLIMLIMMVGNLVIIPVGITFFTEQTTTPWIIFNVASDTVFLLDLIMNFRTGTVNEDSSEIILDPKVIKMNYLKSWFVVDFISSIPVDYIFLIVEKGMDSEVYKTARALRIVRFTKILSLLRLLRLSRLIRYIHQWEEIFHMTYDLASAVVRIFNLIGMMLLLCHWDGCLQFLVPLLQDFPPDCWVSLNEMVNDSWGKQYSYALFKAMSHMLCIGYGAQAPVSMSDLWITMLSMIVGATCYAMFVGHATALIQSLDSSRRQYQEKYKQVEQYMSFHKLPADMRQKIHDYYEHRYQGKIFDEENILSELNDPLREEIVNFNCRKLVATMPLFANADPNFVTAMLSKLRFEVFQPGDYIIREGAVGKKMYFIQHGVAGVITKSSKEMKLTDGSYFGEICLLTKGRRTASVRADTYCRLYSLSVDNFNEVLEEYPMMRRAFETVAIDRLDRIGKKNSILLQKFQKDLNTGVFNNQENEILKQIVKHDREMVQAIPPINYPQMTALNCTSSTTTPTSRMRTQSPPVYTATSLSHSNLHSPSPSTQTPQPSAILSPCSYTTAVCSPPIQSPLATRTFHYASPTASQLSLMQQPQQQLPQSQVQQTQTQTQQQQQQQQQQQQQQQQQQQQQQQQQQQQQQQQQQQQQPQTPGSSTPKNEVHKSTQALHNTNLTKEVRPLSASQPSLPHEVSTLISRPHPTVGESLASIPQPVAAVHSTGLQAGSRSTVPQRVTLFRQMSSGAIPPNRGVPPAPPPPAAVQRESPSVLNTDPDAEKPRFASNL</sequence>
<name>HCN1_MOUSE</name>
<dbReference type="EMBL" id="AF028737">
    <property type="protein sequence ID" value="AAC53518.1"/>
    <property type="molecule type" value="mRNA"/>
</dbReference>
<dbReference type="EMBL" id="AJ225123">
    <property type="protein sequence ID" value="CAA12407.1"/>
    <property type="molecule type" value="mRNA"/>
</dbReference>
<dbReference type="EMBL" id="AK014722">
    <property type="status" value="NOT_ANNOTATED_CDS"/>
    <property type="molecule type" value="mRNA"/>
</dbReference>
<dbReference type="CCDS" id="CCDS26793.1"/>
<dbReference type="RefSeq" id="NP_034538.2">
    <property type="nucleotide sequence ID" value="NM_010408.3"/>
</dbReference>
<dbReference type="PDB" id="3U0Z">
    <property type="method" value="X-ray"/>
    <property type="resolution" value="2.90 A"/>
    <property type="chains" value="A/B=390-592"/>
</dbReference>
<dbReference type="PDBsum" id="3U0Z"/>
<dbReference type="SMR" id="O88704"/>
<dbReference type="BioGRID" id="200252">
    <property type="interactions" value="47"/>
</dbReference>
<dbReference type="ComplexPortal" id="CPX-260">
    <property type="entry name" value="HCN1 channel complex"/>
</dbReference>
<dbReference type="CORUM" id="O88704"/>
<dbReference type="FunCoup" id="O88704">
    <property type="interactions" value="496"/>
</dbReference>
<dbReference type="IntAct" id="O88704">
    <property type="interactions" value="40"/>
</dbReference>
<dbReference type="STRING" id="10090.ENSMUSP00000006991"/>
<dbReference type="BindingDB" id="O88704"/>
<dbReference type="ChEMBL" id="CHEMBL1250401"/>
<dbReference type="DrugCentral" id="O88704"/>
<dbReference type="GuidetoPHARMACOLOGY" id="400"/>
<dbReference type="TCDB" id="1.A.1.5.2">
    <property type="family name" value="the voltage-gated ion channel (vic) superfamily"/>
</dbReference>
<dbReference type="GlyCosmos" id="O88704">
    <property type="glycosylation" value="1 site, No reported glycans"/>
</dbReference>
<dbReference type="GlyGen" id="O88704">
    <property type="glycosylation" value="11 sites, 1 N-linked glycan (1 site), 1 O-linked glycan (9 sites)"/>
</dbReference>
<dbReference type="iPTMnet" id="O88704"/>
<dbReference type="PhosphoSitePlus" id="O88704"/>
<dbReference type="SwissPalm" id="O88704"/>
<dbReference type="PaxDb" id="10090-ENSMUSP00000006991"/>
<dbReference type="PeptideAtlas" id="O88704"/>
<dbReference type="ProteomicsDB" id="269769"/>
<dbReference type="ABCD" id="O88704">
    <property type="antibodies" value="1 sequenced antibody"/>
</dbReference>
<dbReference type="Antibodypedia" id="23274">
    <property type="antibodies" value="360 antibodies from 33 providers"/>
</dbReference>
<dbReference type="DNASU" id="15165"/>
<dbReference type="Ensembl" id="ENSMUST00000006991.9">
    <property type="protein sequence ID" value="ENSMUSP00000006991.8"/>
    <property type="gene ID" value="ENSMUSG00000021730.9"/>
</dbReference>
<dbReference type="GeneID" id="15165"/>
<dbReference type="KEGG" id="mmu:15165"/>
<dbReference type="UCSC" id="uc007ryo.2">
    <property type="organism name" value="mouse"/>
</dbReference>
<dbReference type="AGR" id="MGI:1096392"/>
<dbReference type="CTD" id="348980"/>
<dbReference type="MGI" id="MGI:1096392">
    <property type="gene designation" value="Hcn1"/>
</dbReference>
<dbReference type="VEuPathDB" id="HostDB:ENSMUSG00000021730"/>
<dbReference type="eggNOG" id="KOG0498">
    <property type="taxonomic scope" value="Eukaryota"/>
</dbReference>
<dbReference type="GeneTree" id="ENSGT00940000158207"/>
<dbReference type="HOGENOM" id="CLU_005746_15_1_1"/>
<dbReference type="InParanoid" id="O88704"/>
<dbReference type="OMA" id="TIITRPH"/>
<dbReference type="OrthoDB" id="421226at2759"/>
<dbReference type="PhylomeDB" id="O88704"/>
<dbReference type="TreeFam" id="TF318250"/>
<dbReference type="Reactome" id="R-MMU-1296061">
    <property type="pathway name" value="HCN channels"/>
</dbReference>
<dbReference type="BioGRID-ORCS" id="15165">
    <property type="hits" value="2 hits in 77 CRISPR screens"/>
</dbReference>
<dbReference type="CD-CODE" id="CE726F99">
    <property type="entry name" value="Postsynaptic density"/>
</dbReference>
<dbReference type="ChiTaRS" id="Hcn1">
    <property type="organism name" value="mouse"/>
</dbReference>
<dbReference type="EvolutionaryTrace" id="O88704"/>
<dbReference type="PRO" id="PR:O88704"/>
<dbReference type="Proteomes" id="UP000000589">
    <property type="component" value="Chromosome 13"/>
</dbReference>
<dbReference type="RNAct" id="O88704">
    <property type="molecule type" value="protein"/>
</dbReference>
<dbReference type="Bgee" id="ENSMUSG00000021730">
    <property type="expression patterns" value="Expressed in retrosplenial region and 91 other cell types or tissues"/>
</dbReference>
<dbReference type="GO" id="GO:0097440">
    <property type="term" value="C:apical dendrite"/>
    <property type="evidence" value="ECO:0007669"/>
    <property type="project" value="Ensembl"/>
</dbReference>
<dbReference type="GO" id="GO:0030424">
    <property type="term" value="C:axon"/>
    <property type="evidence" value="ECO:0000314"/>
    <property type="project" value="MGI"/>
</dbReference>
<dbReference type="GO" id="GO:0043679">
    <property type="term" value="C:axon terminus"/>
    <property type="evidence" value="ECO:0007669"/>
    <property type="project" value="Ensembl"/>
</dbReference>
<dbReference type="GO" id="GO:0016323">
    <property type="term" value="C:basolateral plasma membrane"/>
    <property type="evidence" value="ECO:0007669"/>
    <property type="project" value="Ensembl"/>
</dbReference>
<dbReference type="GO" id="GO:0009986">
    <property type="term" value="C:cell surface"/>
    <property type="evidence" value="ECO:0007669"/>
    <property type="project" value="Ensembl"/>
</dbReference>
<dbReference type="GO" id="GO:0030425">
    <property type="term" value="C:dendrite"/>
    <property type="evidence" value="ECO:0000314"/>
    <property type="project" value="MGI"/>
</dbReference>
<dbReference type="GO" id="GO:0032590">
    <property type="term" value="C:dendrite membrane"/>
    <property type="evidence" value="ECO:0007669"/>
    <property type="project" value="Ensembl"/>
</dbReference>
<dbReference type="GO" id="GO:0043198">
    <property type="term" value="C:dendritic shaft"/>
    <property type="evidence" value="ECO:0007669"/>
    <property type="project" value="Ensembl"/>
</dbReference>
<dbReference type="GO" id="GO:0098978">
    <property type="term" value="C:glutamatergic synapse"/>
    <property type="evidence" value="ECO:0000314"/>
    <property type="project" value="SynGO"/>
</dbReference>
<dbReference type="GO" id="GO:0098855">
    <property type="term" value="C:HCN channel complex"/>
    <property type="evidence" value="ECO:0000250"/>
    <property type="project" value="UniProtKB"/>
</dbReference>
<dbReference type="GO" id="GO:0043025">
    <property type="term" value="C:neuronal cell body"/>
    <property type="evidence" value="ECO:0007669"/>
    <property type="project" value="Ensembl"/>
</dbReference>
<dbReference type="GO" id="GO:0005886">
    <property type="term" value="C:plasma membrane"/>
    <property type="evidence" value="ECO:0000314"/>
    <property type="project" value="MGI"/>
</dbReference>
<dbReference type="GO" id="GO:0045211">
    <property type="term" value="C:postsynaptic membrane"/>
    <property type="evidence" value="ECO:0000314"/>
    <property type="project" value="SynGO"/>
</dbReference>
<dbReference type="GO" id="GO:0048787">
    <property type="term" value="C:presynaptic active zone membrane"/>
    <property type="evidence" value="ECO:0000314"/>
    <property type="project" value="SynGO"/>
</dbReference>
<dbReference type="GO" id="GO:0030552">
    <property type="term" value="F:cAMP binding"/>
    <property type="evidence" value="ECO:0000314"/>
    <property type="project" value="UniProtKB"/>
</dbReference>
<dbReference type="GO" id="GO:0042802">
    <property type="term" value="F:identical protein binding"/>
    <property type="evidence" value="ECO:0000353"/>
    <property type="project" value="IntAct"/>
</dbReference>
<dbReference type="GO" id="GO:0140232">
    <property type="term" value="F:intracellular cAMP-activated cation channel activity involved in regulation of presynaptic membrane potential"/>
    <property type="evidence" value="ECO:0000314"/>
    <property type="project" value="SynGO"/>
</dbReference>
<dbReference type="GO" id="GO:0005222">
    <property type="term" value="F:intracellularly cAMP-activated cation channel activity"/>
    <property type="evidence" value="ECO:0000314"/>
    <property type="project" value="MGI"/>
</dbReference>
<dbReference type="GO" id="GO:0005547">
    <property type="term" value="F:phosphatidylinositol-3,4,5-trisphosphate binding"/>
    <property type="evidence" value="ECO:0007669"/>
    <property type="project" value="Ensembl"/>
</dbReference>
<dbReference type="GO" id="GO:0005546">
    <property type="term" value="F:phosphatidylinositol-4,5-bisphosphate binding"/>
    <property type="evidence" value="ECO:0007669"/>
    <property type="project" value="Ensembl"/>
</dbReference>
<dbReference type="GO" id="GO:0022843">
    <property type="term" value="F:voltage-gated monoatomic cation channel activity"/>
    <property type="evidence" value="ECO:0000250"/>
    <property type="project" value="UniProtKB"/>
</dbReference>
<dbReference type="GO" id="GO:0005249">
    <property type="term" value="F:voltage-gated potassium channel activity"/>
    <property type="evidence" value="ECO:0000315"/>
    <property type="project" value="UniProtKB"/>
</dbReference>
<dbReference type="GO" id="GO:0005248">
    <property type="term" value="F:voltage-gated sodium channel activity"/>
    <property type="evidence" value="ECO:0007669"/>
    <property type="project" value="Ensembl"/>
</dbReference>
<dbReference type="GO" id="GO:0045176">
    <property type="term" value="P:apical protein localization"/>
    <property type="evidence" value="ECO:0000315"/>
    <property type="project" value="MGI"/>
</dbReference>
<dbReference type="GO" id="GO:0071320">
    <property type="term" value="P:cellular response to cAMP"/>
    <property type="evidence" value="ECO:0000315"/>
    <property type="project" value="UniProtKB"/>
</dbReference>
<dbReference type="GO" id="GO:0035458">
    <property type="term" value="P:cellular response to interferon-beta"/>
    <property type="evidence" value="ECO:0007669"/>
    <property type="project" value="Ensembl"/>
</dbReference>
<dbReference type="GO" id="GO:0051867">
    <property type="term" value="P:general adaptation syndrome, behavioral process"/>
    <property type="evidence" value="ECO:0000314"/>
    <property type="project" value="MGI"/>
</dbReference>
<dbReference type="GO" id="GO:0042711">
    <property type="term" value="P:maternal behavior"/>
    <property type="evidence" value="ECO:0007669"/>
    <property type="project" value="Ensembl"/>
</dbReference>
<dbReference type="GO" id="GO:0045759">
    <property type="term" value="P:negative regulation of action potential"/>
    <property type="evidence" value="ECO:0007669"/>
    <property type="project" value="Ensembl"/>
</dbReference>
<dbReference type="GO" id="GO:0019228">
    <property type="term" value="P:neuronal action potential"/>
    <property type="evidence" value="ECO:0000314"/>
    <property type="project" value="MGI"/>
</dbReference>
<dbReference type="GO" id="GO:1902632">
    <property type="term" value="P:positive regulation of membrane hyperpolarization"/>
    <property type="evidence" value="ECO:0007669"/>
    <property type="project" value="Ensembl"/>
</dbReference>
<dbReference type="GO" id="GO:0071805">
    <property type="term" value="P:potassium ion transmembrane transport"/>
    <property type="evidence" value="ECO:0000315"/>
    <property type="project" value="UniProtKB"/>
</dbReference>
<dbReference type="GO" id="GO:0051289">
    <property type="term" value="P:protein homotetramerization"/>
    <property type="evidence" value="ECO:0000250"/>
    <property type="project" value="UniProtKB"/>
</dbReference>
<dbReference type="GO" id="GO:0003254">
    <property type="term" value="P:regulation of membrane depolarization"/>
    <property type="evidence" value="ECO:0007669"/>
    <property type="project" value="Ensembl"/>
</dbReference>
<dbReference type="GO" id="GO:0060078">
    <property type="term" value="P:regulation of postsynaptic membrane potential"/>
    <property type="evidence" value="ECO:0000314"/>
    <property type="project" value="SynGO"/>
</dbReference>
<dbReference type="GO" id="GO:0051592">
    <property type="term" value="P:response to calcium ion"/>
    <property type="evidence" value="ECO:0007669"/>
    <property type="project" value="Ensembl"/>
</dbReference>
<dbReference type="GO" id="GO:1902065">
    <property type="term" value="P:response to L-glutamate"/>
    <property type="evidence" value="ECO:0007669"/>
    <property type="project" value="Ensembl"/>
</dbReference>
<dbReference type="GO" id="GO:0046549">
    <property type="term" value="P:retinal cone cell development"/>
    <property type="evidence" value="ECO:0000315"/>
    <property type="project" value="MGI"/>
</dbReference>
<dbReference type="CDD" id="cd00038">
    <property type="entry name" value="CAP_ED"/>
    <property type="match status" value="1"/>
</dbReference>
<dbReference type="FunFam" id="1.10.287.70:FF:000031">
    <property type="entry name" value="Potassium/sodium hyperpolarization-activated cyclic nucleotide-gated channel 1, putative"/>
    <property type="match status" value="1"/>
</dbReference>
<dbReference type="FunFam" id="1.10.287.630:FF:000002">
    <property type="entry name" value="Potassium/sodium hyperpolarization-activated cyclic nucleotide-gated channel 4"/>
    <property type="match status" value="1"/>
</dbReference>
<dbReference type="FunFam" id="2.60.120.10:FF:000007">
    <property type="entry name" value="Putative potassium/sodium hyperpolarization-activated cyclic nucleotide-gated channel 2"/>
    <property type="match status" value="1"/>
</dbReference>
<dbReference type="Gene3D" id="1.10.287.70">
    <property type="match status" value="1"/>
</dbReference>
<dbReference type="Gene3D" id="1.10.287.630">
    <property type="entry name" value="Helix hairpin bin"/>
    <property type="match status" value="1"/>
</dbReference>
<dbReference type="Gene3D" id="2.60.120.10">
    <property type="entry name" value="Jelly Rolls"/>
    <property type="match status" value="1"/>
</dbReference>
<dbReference type="InterPro" id="IPR018488">
    <property type="entry name" value="cNMP-bd_CS"/>
</dbReference>
<dbReference type="InterPro" id="IPR000595">
    <property type="entry name" value="cNMP-bd_dom"/>
</dbReference>
<dbReference type="InterPro" id="IPR018490">
    <property type="entry name" value="cNMP-bd_dom_sf"/>
</dbReference>
<dbReference type="InterPro" id="IPR005821">
    <property type="entry name" value="Ion_trans_dom"/>
</dbReference>
<dbReference type="InterPro" id="IPR013621">
    <property type="entry name" value="Ion_trans_N"/>
</dbReference>
<dbReference type="InterPro" id="IPR051413">
    <property type="entry name" value="K/Na_HCN_channel"/>
</dbReference>
<dbReference type="InterPro" id="IPR003938">
    <property type="entry name" value="K_chnl_volt-dep_EAG/ELK/ERG"/>
</dbReference>
<dbReference type="InterPro" id="IPR014710">
    <property type="entry name" value="RmlC-like_jellyroll"/>
</dbReference>
<dbReference type="PANTHER" id="PTHR45689">
    <property type="entry name" value="I[[H]] CHANNEL, ISOFORM E"/>
    <property type="match status" value="1"/>
</dbReference>
<dbReference type="PANTHER" id="PTHR45689:SF3">
    <property type="entry name" value="POTASSIUM_SODIUM HYPERPOLARIZATION-ACTIVATED CYCLIC NUCLEOTIDE-GATED CHANNEL 1"/>
    <property type="match status" value="1"/>
</dbReference>
<dbReference type="Pfam" id="PF00027">
    <property type="entry name" value="cNMP_binding"/>
    <property type="match status" value="1"/>
</dbReference>
<dbReference type="Pfam" id="PF00520">
    <property type="entry name" value="Ion_trans"/>
    <property type="match status" value="1"/>
</dbReference>
<dbReference type="Pfam" id="PF08412">
    <property type="entry name" value="Ion_trans_N"/>
    <property type="match status" value="1"/>
</dbReference>
<dbReference type="PRINTS" id="PR01463">
    <property type="entry name" value="EAGCHANLFMLY"/>
</dbReference>
<dbReference type="SMART" id="SM00100">
    <property type="entry name" value="cNMP"/>
    <property type="match status" value="1"/>
</dbReference>
<dbReference type="SUPFAM" id="SSF51206">
    <property type="entry name" value="cAMP-binding domain-like"/>
    <property type="match status" value="1"/>
</dbReference>
<dbReference type="SUPFAM" id="SSF81324">
    <property type="entry name" value="Voltage-gated potassium channels"/>
    <property type="match status" value="1"/>
</dbReference>
<dbReference type="PROSITE" id="PS00888">
    <property type="entry name" value="CNMP_BINDING_1"/>
    <property type="match status" value="1"/>
</dbReference>
<dbReference type="PROSITE" id="PS50042">
    <property type="entry name" value="CNMP_BINDING_3"/>
    <property type="match status" value="1"/>
</dbReference>
<comment type="function">
    <text evidence="4 5 6 9 10 14">Hyperpolarization-activated ion channel that are permeable to sodium and potassium ions (PubMed:12034718, PubMed:22006928, PubMed:9630217). Exhibits weak selectivity for potassium over sodium ions (PubMed:11459060). Contributes to the native pacemaker currents in heart (If) and in neurons (Ih) (PubMed:11459060). Participates in cerebellar mechanisms of motor learning (PubMed:14651847). May mediate responses to sour stimuli (PubMed:11675786).</text>
</comment>
<comment type="catalytic activity">
    <reaction evidence="14">
        <text>Na(+)(in) = Na(+)(out)</text>
        <dbReference type="Rhea" id="RHEA:34963"/>
        <dbReference type="ChEBI" id="CHEBI:29101"/>
    </reaction>
</comment>
<comment type="catalytic activity">
    <reaction evidence="14">
        <text>K(+)(in) = K(+)(out)</text>
        <dbReference type="Rhea" id="RHEA:29463"/>
        <dbReference type="ChEBI" id="CHEBI:29103"/>
    </reaction>
</comment>
<comment type="activity regulation">
    <text evidence="4 10 14">Activated by cAMP (PubMed:11459060, PubMed:22006928). cAMP binding causes a conformation change that leads to the assembly of an active tetramer and channel opening (PubMed:22006928). Compared to other family members, cAMP has less stimulatory effect on HCN1 because part of the molecules already contain bound cAMP and form homotetramers when cAMP levels are low, this inherent tetramerization in HCN1 results in a weaker response to increased cAMP.</text>
</comment>
<comment type="subunit">
    <text evidence="3 6 7 10 13">Homotetramer (PubMed:22006928). Heterotetramer with HCN2. The potassium channel is composed of a homo- or heterotetrameric complex of pore-forming subunits. Interacts with KCNE2. Interacts with the SH3 domain of CSK (PubMed:9405696).</text>
</comment>
<comment type="interaction">
    <interactant intactId="EBI-8766347">
        <id>O88704</id>
    </interactant>
    <interactant intactId="EBI-8766347">
        <id>O88704</id>
        <label>Hcn1</label>
    </interactant>
    <organismsDiffer>false</organismsDiffer>
    <experiments>2</experiments>
</comment>
<comment type="subcellular location">
    <subcellularLocation>
        <location evidence="4 10 14">Cell membrane</location>
        <topology evidence="10">Multi-pass membrane protein</topology>
    </subcellularLocation>
</comment>
<comment type="tissue specificity">
    <text evidence="5 12 13">Predominantly expressed in brain (PubMed:9405696). Highly expressed in apical dendrites of pyramidal neurons in the cortex, in the layer corresponding to the stratum lacunosum-moleculare in the hippocampus and in axons of basket cells in the cerebellum (at protein level) (PubMed:26269648, PubMed:9405696). Expressed in a subset of elongated cells in taste buds (PubMed:11675786).</text>
</comment>
<comment type="domain">
    <text evidence="1">The segment S4 is probably the voltage-sensor and is characterized by a series of positively charged amino acids at every third position.</text>
</comment>
<comment type="PTM">
    <text evidence="13">N-glycosylated.</text>
</comment>
<comment type="disruption phenotype">
    <text evidence="9 11">Deficient mice are viable and do not display an overt phenotype. However, these animals are defective in the learning of fast motor tasks due to a malfunctioning of cerebellar Purkinje cells (PubMed:14651847). Mice lacking HCN1 developp severe sinus bradycardia and reduced cardiac output (PubMed:24218458).</text>
</comment>
<comment type="similarity">
    <text evidence="17">Belongs to the potassium channel HCN family.</text>
</comment>
<protein>
    <recommendedName>
        <fullName>Potassium/sodium hyperpolarization-activated cyclic nucleotide-gated channel 1</fullName>
    </recommendedName>
    <alternativeName>
        <fullName evidence="15">Brain cyclic nucleotide-gated channel 1</fullName>
        <shortName evidence="15">BCNG-1</shortName>
    </alternativeName>
    <alternativeName>
        <fullName evidence="16">Hyperpolarization-activated cation channel 2</fullName>
        <shortName evidence="16">HAC-2</shortName>
    </alternativeName>
</protein>
<accession>O88704</accession>
<accession>O54899</accession>
<accession>Q9D613</accession>
<gene>
    <name type="primary">Hcn1</name>
    <name evidence="15" type="synonym">Bcng1</name>
    <name type="synonym">Hac2</name>
</gene>